<feature type="chain" id="PRO_0000264025" description="Peptidyl-tRNA hydrolase 1">
    <location>
        <begin position="1"/>
        <end position="193"/>
    </location>
</feature>
<feature type="active site" description="Proton acceptor" evidence="1">
    <location>
        <position position="32"/>
    </location>
</feature>
<feature type="binding site" evidence="1">
    <location>
        <position position="27"/>
    </location>
    <ligand>
        <name>tRNA</name>
        <dbReference type="ChEBI" id="CHEBI:17843"/>
    </ligand>
</feature>
<feature type="binding site" evidence="1">
    <location>
        <position position="80"/>
    </location>
    <ligand>
        <name>tRNA</name>
        <dbReference type="ChEBI" id="CHEBI:17843"/>
    </ligand>
</feature>
<feature type="binding site" evidence="1">
    <location>
        <position position="82"/>
    </location>
    <ligand>
        <name>tRNA</name>
        <dbReference type="ChEBI" id="CHEBI:17843"/>
    </ligand>
</feature>
<feature type="binding site" evidence="1">
    <location>
        <position position="128"/>
    </location>
    <ligand>
        <name>tRNA</name>
        <dbReference type="ChEBI" id="CHEBI:17843"/>
    </ligand>
</feature>
<feature type="site" description="Discriminates between blocked and unblocked aminoacyl-tRNA" evidence="1">
    <location>
        <position position="22"/>
    </location>
</feature>
<feature type="site" description="Stabilizes the basic form of H active site to accept a proton" evidence="1">
    <location>
        <position position="107"/>
    </location>
</feature>
<gene>
    <name evidence="1" type="primary">pth1</name>
    <name type="ordered locus">jk1495</name>
</gene>
<accession>Q4JU39</accession>
<evidence type="ECO:0000255" key="1">
    <source>
        <dbReference type="HAMAP-Rule" id="MF_00083"/>
    </source>
</evidence>
<evidence type="ECO:0000305" key="2"/>
<keyword id="KW-0963">Cytoplasm</keyword>
<keyword id="KW-0378">Hydrolase</keyword>
<keyword id="KW-1185">Reference proteome</keyword>
<keyword id="KW-0694">RNA-binding</keyword>
<keyword id="KW-0820">tRNA-binding</keyword>
<reference key="1">
    <citation type="journal article" date="2005" name="J. Bacteriol.">
        <title>Complete genome sequence and analysis of the multiresistant nosocomial pathogen Corynebacterium jeikeium K411, a lipid-requiring bacterium of the human skin flora.</title>
        <authorList>
            <person name="Tauch A."/>
            <person name="Kaiser O."/>
            <person name="Hain T."/>
            <person name="Goesmann A."/>
            <person name="Weisshaar B."/>
            <person name="Albersmeier A."/>
            <person name="Bekel T."/>
            <person name="Bischoff N."/>
            <person name="Brune I."/>
            <person name="Chakraborty T."/>
            <person name="Kalinowski J."/>
            <person name="Meyer F."/>
            <person name="Rupp O."/>
            <person name="Schneiker S."/>
            <person name="Viehoever P."/>
            <person name="Puehler A."/>
        </authorList>
    </citation>
    <scope>NUCLEOTIDE SEQUENCE [LARGE SCALE GENOMIC DNA]</scope>
    <source>
        <strain>K411</strain>
    </source>
</reference>
<sequence length="193" mass="20691">MASPNKKQHTNSDTWLIVGLGNPGDKYANTRHNVGRMVIGELLDRQVPAASLNTHKKTNTDIAEVKIAGRKVVLAQPRTFMNVSGGPVQQLAAFFKIPAENIIVAYDDLEGDPGAVKLRQSGGDKGHNGLKSITKSLGTKDYWRLSCGIGRPPGRMDPAAYVLKPFPKSEAAEVAIMCADAADEVERTLGVGN</sequence>
<organism>
    <name type="scientific">Corynebacterium jeikeium (strain K411)</name>
    <dbReference type="NCBI Taxonomy" id="306537"/>
    <lineage>
        <taxon>Bacteria</taxon>
        <taxon>Bacillati</taxon>
        <taxon>Actinomycetota</taxon>
        <taxon>Actinomycetes</taxon>
        <taxon>Mycobacteriales</taxon>
        <taxon>Corynebacteriaceae</taxon>
        <taxon>Corynebacterium</taxon>
    </lineage>
</organism>
<name>PTH1_CORJK</name>
<dbReference type="EC" id="3.1.1.29" evidence="1"/>
<dbReference type="EMBL" id="CR931997">
    <property type="protein sequence ID" value="CAI37668.1"/>
    <property type="status" value="ALT_INIT"/>
    <property type="molecule type" value="Genomic_DNA"/>
</dbReference>
<dbReference type="RefSeq" id="WP_173362243.1">
    <property type="nucleotide sequence ID" value="NC_007164.1"/>
</dbReference>
<dbReference type="SMR" id="Q4JU39"/>
<dbReference type="STRING" id="306537.jk1495"/>
<dbReference type="KEGG" id="cjk:jk1495"/>
<dbReference type="PATRIC" id="fig|306537.10.peg.1515"/>
<dbReference type="eggNOG" id="COG0193">
    <property type="taxonomic scope" value="Bacteria"/>
</dbReference>
<dbReference type="HOGENOM" id="CLU_062456_2_2_11"/>
<dbReference type="Proteomes" id="UP000000545">
    <property type="component" value="Chromosome"/>
</dbReference>
<dbReference type="GO" id="GO:0005737">
    <property type="term" value="C:cytoplasm"/>
    <property type="evidence" value="ECO:0007669"/>
    <property type="project" value="UniProtKB-SubCell"/>
</dbReference>
<dbReference type="GO" id="GO:0004045">
    <property type="term" value="F:peptidyl-tRNA hydrolase activity"/>
    <property type="evidence" value="ECO:0007669"/>
    <property type="project" value="UniProtKB-UniRule"/>
</dbReference>
<dbReference type="GO" id="GO:0000049">
    <property type="term" value="F:tRNA binding"/>
    <property type="evidence" value="ECO:0007669"/>
    <property type="project" value="UniProtKB-UniRule"/>
</dbReference>
<dbReference type="GO" id="GO:0006515">
    <property type="term" value="P:protein quality control for misfolded or incompletely synthesized proteins"/>
    <property type="evidence" value="ECO:0007669"/>
    <property type="project" value="UniProtKB-UniRule"/>
</dbReference>
<dbReference type="GO" id="GO:0072344">
    <property type="term" value="P:rescue of stalled ribosome"/>
    <property type="evidence" value="ECO:0007669"/>
    <property type="project" value="UniProtKB-UniRule"/>
</dbReference>
<dbReference type="CDD" id="cd00462">
    <property type="entry name" value="PTH"/>
    <property type="match status" value="1"/>
</dbReference>
<dbReference type="FunFam" id="3.40.50.1470:FF:000001">
    <property type="entry name" value="Peptidyl-tRNA hydrolase"/>
    <property type="match status" value="1"/>
</dbReference>
<dbReference type="Gene3D" id="3.40.50.1470">
    <property type="entry name" value="Peptidyl-tRNA hydrolase"/>
    <property type="match status" value="1"/>
</dbReference>
<dbReference type="HAMAP" id="MF_00083">
    <property type="entry name" value="Pept_tRNA_hydro_bact"/>
    <property type="match status" value="1"/>
</dbReference>
<dbReference type="InterPro" id="IPR001328">
    <property type="entry name" value="Pept_tRNA_hydro"/>
</dbReference>
<dbReference type="InterPro" id="IPR018171">
    <property type="entry name" value="Pept_tRNA_hydro_CS"/>
</dbReference>
<dbReference type="InterPro" id="IPR036416">
    <property type="entry name" value="Pept_tRNA_hydro_sf"/>
</dbReference>
<dbReference type="NCBIfam" id="TIGR00447">
    <property type="entry name" value="pth"/>
    <property type="match status" value="1"/>
</dbReference>
<dbReference type="PANTHER" id="PTHR17224">
    <property type="entry name" value="PEPTIDYL-TRNA HYDROLASE"/>
    <property type="match status" value="1"/>
</dbReference>
<dbReference type="PANTHER" id="PTHR17224:SF1">
    <property type="entry name" value="PEPTIDYL-TRNA HYDROLASE"/>
    <property type="match status" value="1"/>
</dbReference>
<dbReference type="Pfam" id="PF01195">
    <property type="entry name" value="Pept_tRNA_hydro"/>
    <property type="match status" value="1"/>
</dbReference>
<dbReference type="SUPFAM" id="SSF53178">
    <property type="entry name" value="Peptidyl-tRNA hydrolase-like"/>
    <property type="match status" value="1"/>
</dbReference>
<dbReference type="PROSITE" id="PS01196">
    <property type="entry name" value="PEPT_TRNA_HYDROL_2"/>
    <property type="match status" value="1"/>
</dbReference>
<comment type="function">
    <text evidence="1">Hydrolyzes ribosome-free peptidyl-tRNAs (with 1 or more amino acids incorporated), which drop off the ribosome during protein synthesis, or as a result of ribosome stalling.</text>
</comment>
<comment type="function">
    <text evidence="1">Catalyzes the release of premature peptidyl moieties from peptidyl-tRNA molecules trapped in stalled 50S ribosomal subunits, and thus maintains levels of free tRNAs and 50S ribosomes.</text>
</comment>
<comment type="catalytic activity">
    <reaction evidence="1">
        <text>an N-acyl-L-alpha-aminoacyl-tRNA + H2O = an N-acyl-L-amino acid + a tRNA + H(+)</text>
        <dbReference type="Rhea" id="RHEA:54448"/>
        <dbReference type="Rhea" id="RHEA-COMP:10123"/>
        <dbReference type="Rhea" id="RHEA-COMP:13883"/>
        <dbReference type="ChEBI" id="CHEBI:15377"/>
        <dbReference type="ChEBI" id="CHEBI:15378"/>
        <dbReference type="ChEBI" id="CHEBI:59874"/>
        <dbReference type="ChEBI" id="CHEBI:78442"/>
        <dbReference type="ChEBI" id="CHEBI:138191"/>
        <dbReference type="EC" id="3.1.1.29"/>
    </reaction>
</comment>
<comment type="subunit">
    <text evidence="1">Monomer.</text>
</comment>
<comment type="subcellular location">
    <subcellularLocation>
        <location evidence="1">Cytoplasm</location>
    </subcellularLocation>
</comment>
<comment type="similarity">
    <text evidence="1">Belongs to the PTH family.</text>
</comment>
<comment type="sequence caution" evidence="2">
    <conflict type="erroneous initiation">
        <sequence resource="EMBL-CDS" id="CAI37668"/>
    </conflict>
    <text>Extended N-terminus.</text>
</comment>
<proteinExistence type="inferred from homology"/>
<protein>
    <recommendedName>
        <fullName evidence="1">Peptidyl-tRNA hydrolase 1</fullName>
        <shortName evidence="1">Pth 1</shortName>
        <ecNumber evidence="1">3.1.1.29</ecNumber>
    </recommendedName>
</protein>